<dbReference type="EMBL" id="AB002693">
    <property type="protein sequence ID" value="BAA19606.1"/>
    <property type="molecule type" value="mRNA"/>
</dbReference>
<dbReference type="EMBL" id="D87059">
    <property type="protein sequence ID" value="BAA13237.1"/>
    <property type="molecule type" value="mRNA"/>
</dbReference>
<dbReference type="EMBL" id="AF271073">
    <property type="protein sequence ID" value="AAK55514.1"/>
    <property type="molecule type" value="Genomic_DNA"/>
</dbReference>
<dbReference type="EMBL" id="AF266724">
    <property type="protein sequence ID" value="AAK55514.1"/>
    <property type="status" value="JOINED"/>
    <property type="molecule type" value="Genomic_DNA"/>
</dbReference>
<dbReference type="EMBL" id="AF266725">
    <property type="protein sequence ID" value="AAK55514.1"/>
    <property type="status" value="JOINED"/>
    <property type="molecule type" value="Genomic_DNA"/>
</dbReference>
<dbReference type="EMBL" id="AF266726">
    <property type="protein sequence ID" value="AAK55514.1"/>
    <property type="status" value="JOINED"/>
    <property type="molecule type" value="Genomic_DNA"/>
</dbReference>
<dbReference type="EMBL" id="AF266727">
    <property type="protein sequence ID" value="AAK55514.1"/>
    <property type="status" value="JOINED"/>
    <property type="molecule type" value="Genomic_DNA"/>
</dbReference>
<dbReference type="EMBL" id="AF266728">
    <property type="protein sequence ID" value="AAK55514.1"/>
    <property type="status" value="JOINED"/>
    <property type="molecule type" value="Genomic_DNA"/>
</dbReference>
<dbReference type="EMBL" id="AY529655">
    <property type="protein sequence ID" value="AAS20611.1"/>
    <property type="molecule type" value="mRNA"/>
</dbReference>
<dbReference type="EMBL" id="AB078635">
    <property type="protein sequence ID" value="BAB84081.1"/>
    <property type="molecule type" value="Genomic_DNA"/>
</dbReference>
<dbReference type="CCDS" id="CCDS22089.1"/>
<dbReference type="RefSeq" id="NP_035518.1">
    <property type="nucleotide sequence ID" value="NM_011388.3"/>
</dbReference>
<dbReference type="SMR" id="P70172"/>
<dbReference type="BioGRID" id="203275">
    <property type="interactions" value="1"/>
</dbReference>
<dbReference type="FunCoup" id="P70172">
    <property type="interactions" value="13"/>
</dbReference>
<dbReference type="STRING" id="10090.ENSMUSP00000023835"/>
<dbReference type="BindingDB" id="P70172"/>
<dbReference type="ChEMBL" id="CHEMBL2073708"/>
<dbReference type="GlyCosmos" id="P70172">
    <property type="glycosylation" value="2 sites, No reported glycans"/>
</dbReference>
<dbReference type="GlyGen" id="P70172">
    <property type="glycosylation" value="2 sites"/>
</dbReference>
<dbReference type="iPTMnet" id="P70172"/>
<dbReference type="PhosphoSitePlus" id="P70172"/>
<dbReference type="jPOST" id="P70172"/>
<dbReference type="PaxDb" id="10090-ENSMUSP00000023835"/>
<dbReference type="ProteomicsDB" id="287831"/>
<dbReference type="Antibodypedia" id="11241">
    <property type="antibodies" value="187 antibodies from 30 providers"/>
</dbReference>
<dbReference type="DNASU" id="20494"/>
<dbReference type="Ensembl" id="ENSMUST00000023835.3">
    <property type="protein sequence ID" value="ENSMUSP00000023835.2"/>
    <property type="gene ID" value="ENSMUSG00000023073.3"/>
</dbReference>
<dbReference type="GeneID" id="20494"/>
<dbReference type="KEGG" id="mmu:20494"/>
<dbReference type="UCSC" id="uc009kub.1">
    <property type="organism name" value="mouse"/>
</dbReference>
<dbReference type="AGR" id="MGI:1201406"/>
<dbReference type="CTD" id="6555"/>
<dbReference type="MGI" id="MGI:1201406">
    <property type="gene designation" value="Slc10a2"/>
</dbReference>
<dbReference type="VEuPathDB" id="HostDB:ENSMUSG00000023073"/>
<dbReference type="eggNOG" id="KOG2718">
    <property type="taxonomic scope" value="Eukaryota"/>
</dbReference>
<dbReference type="GeneTree" id="ENSGT00950000182808"/>
<dbReference type="HOGENOM" id="CLU_034788_7_5_1"/>
<dbReference type="InParanoid" id="P70172"/>
<dbReference type="OMA" id="AHYVIMP"/>
<dbReference type="OrthoDB" id="203097at2759"/>
<dbReference type="PhylomeDB" id="P70172"/>
<dbReference type="TreeFam" id="TF315811"/>
<dbReference type="Reactome" id="R-MMU-159418">
    <property type="pathway name" value="Recycling of bile acids and salts"/>
</dbReference>
<dbReference type="BioGRID-ORCS" id="20494">
    <property type="hits" value="1 hit in 80 CRISPR screens"/>
</dbReference>
<dbReference type="PRO" id="PR:P70172"/>
<dbReference type="Proteomes" id="UP000000589">
    <property type="component" value="Chromosome 8"/>
</dbReference>
<dbReference type="RNAct" id="P70172">
    <property type="molecule type" value="protein"/>
</dbReference>
<dbReference type="Bgee" id="ENSMUSG00000023073">
    <property type="expression patterns" value="Expressed in proximal tubule and 35 other cell types or tissues"/>
</dbReference>
<dbReference type="ExpressionAtlas" id="P70172">
    <property type="expression patterns" value="baseline and differential"/>
</dbReference>
<dbReference type="GO" id="GO:0016324">
    <property type="term" value="C:apical plasma membrane"/>
    <property type="evidence" value="ECO:0000314"/>
    <property type="project" value="MGI"/>
</dbReference>
<dbReference type="GO" id="GO:0005902">
    <property type="term" value="C:microvillus"/>
    <property type="evidence" value="ECO:0000314"/>
    <property type="project" value="MGI"/>
</dbReference>
<dbReference type="GO" id="GO:0000502">
    <property type="term" value="C:proteasome complex"/>
    <property type="evidence" value="ECO:0007669"/>
    <property type="project" value="Ensembl"/>
</dbReference>
<dbReference type="GO" id="GO:0008508">
    <property type="term" value="F:bile acid:sodium symporter activity"/>
    <property type="evidence" value="ECO:0007669"/>
    <property type="project" value="Ensembl"/>
</dbReference>
<dbReference type="GO" id="GO:0009617">
    <property type="term" value="P:response to bacterium"/>
    <property type="evidence" value="ECO:0000270"/>
    <property type="project" value="MGI"/>
</dbReference>
<dbReference type="FunFam" id="1.20.1530.20:FF:000010">
    <property type="entry name" value="Solute carrier family 10 member 6"/>
    <property type="match status" value="1"/>
</dbReference>
<dbReference type="Gene3D" id="1.20.1530.20">
    <property type="match status" value="1"/>
</dbReference>
<dbReference type="InterPro" id="IPR002657">
    <property type="entry name" value="BilAc:Na_symport/Acr3"/>
</dbReference>
<dbReference type="InterPro" id="IPR004710">
    <property type="entry name" value="Bilac:Na_transpt"/>
</dbReference>
<dbReference type="InterPro" id="IPR038770">
    <property type="entry name" value="Na+/solute_symporter_sf"/>
</dbReference>
<dbReference type="NCBIfam" id="TIGR00841">
    <property type="entry name" value="bass"/>
    <property type="match status" value="1"/>
</dbReference>
<dbReference type="PANTHER" id="PTHR10361:SF19">
    <property type="entry name" value="ILEAL SODIUM_BILE ACID COTRANSPORTER"/>
    <property type="match status" value="1"/>
</dbReference>
<dbReference type="PANTHER" id="PTHR10361">
    <property type="entry name" value="SODIUM-BILE ACID COTRANSPORTER"/>
    <property type="match status" value="1"/>
</dbReference>
<dbReference type="Pfam" id="PF01758">
    <property type="entry name" value="SBF"/>
    <property type="match status" value="1"/>
</dbReference>
<sequence>MDNSSVCPPNATVCEGDSCVVPESNFNAILNTVMSTVLTILLAMVMFSMGCNVEVHKFLGHIKRPWGIFVGFLCQFGIMPLTGFILSVASGILPVQAVVVLIMGCCPGGTGSNILAYWIDGDMDLSVSMTTCSTLLALGMMPLCLFVYTKMWVDSGTIVIPYDSIGISLVALVIPVSFGMFVNHKWPQKAKIILKIGSITGVILIVLIAVIGGILYQSAWIIEPKLWIIGTIFPIAGYSLGFFLARLAGQPWYRCRTVALETGMQNTQLCSTIVQLSFSPEDLNLVFTFPLIYTVFQLVFAAVILGIYVTYRKCYGKNDAEFLEKTDNEMDSRPSFDETNKGFQPDEK</sequence>
<feature type="chain" id="PRO_0000052340" description="Ileal sodium/bile acid cotransporter">
    <location>
        <begin position="1"/>
        <end position="348"/>
    </location>
</feature>
<feature type="topological domain" description="Extracellular" evidence="4">
    <location>
        <begin position="1"/>
        <end position="28"/>
    </location>
</feature>
<feature type="transmembrane region" description="Helical" evidence="4">
    <location>
        <begin position="29"/>
        <end position="49"/>
    </location>
</feature>
<feature type="topological domain" description="Cytoplasmic" evidence="4">
    <location>
        <begin position="50"/>
        <end position="87"/>
    </location>
</feature>
<feature type="transmembrane region" description="Helical" evidence="4">
    <location>
        <begin position="88"/>
        <end position="108"/>
    </location>
</feature>
<feature type="topological domain" description="Extracellular" evidence="4">
    <location>
        <begin position="109"/>
        <end position="126"/>
    </location>
</feature>
<feature type="transmembrane region" description="Helical" evidence="4">
    <location>
        <begin position="127"/>
        <end position="147"/>
    </location>
</feature>
<feature type="topological domain" description="Cytoplasmic" evidence="4">
    <location>
        <begin position="148"/>
        <end position="157"/>
    </location>
</feature>
<feature type="transmembrane region" description="Helical" evidence="4">
    <location>
        <begin position="158"/>
        <end position="178"/>
    </location>
</feature>
<feature type="topological domain" description="Extracellular" evidence="4">
    <location>
        <begin position="179"/>
        <end position="195"/>
    </location>
</feature>
<feature type="transmembrane region" description="Helical" evidence="4">
    <location>
        <begin position="196"/>
        <end position="216"/>
    </location>
</feature>
<feature type="topological domain" description="Cytoplasmic" evidence="4">
    <location>
        <begin position="217"/>
        <end position="224"/>
    </location>
</feature>
<feature type="transmembrane region" description="Helical" evidence="4">
    <location>
        <begin position="225"/>
        <end position="245"/>
    </location>
</feature>
<feature type="topological domain" description="Extracellular" evidence="4">
    <location>
        <begin position="246"/>
        <end position="284"/>
    </location>
</feature>
<feature type="transmembrane region" description="Helical" evidence="4">
    <location>
        <begin position="285"/>
        <end position="305"/>
    </location>
</feature>
<feature type="topological domain" description="Cytoplasmic" evidence="4">
    <location>
        <begin position="306"/>
        <end position="348"/>
    </location>
</feature>
<feature type="region of interest" description="Disordered" evidence="5">
    <location>
        <begin position="328"/>
        <end position="348"/>
    </location>
</feature>
<feature type="modified residue" description="Phosphoserine" evidence="11">
    <location>
        <position position="335"/>
    </location>
</feature>
<feature type="glycosylation site" description="N-linked (GlcNAc...) asparagine" evidence="4">
    <location>
        <position position="3"/>
    </location>
</feature>
<feature type="glycosylation site" description="N-linked (GlcNAc...) asparagine" evidence="4">
    <location>
        <position position="10"/>
    </location>
</feature>
<feature type="sequence variant" description="In strain: NZB/BlNJ and C57BL/6." evidence="7 8">
    <original>I</original>
    <variation>V</variation>
    <location>
        <position position="29"/>
    </location>
</feature>
<feature type="sequence variant" description="In strain: NZB/BlNJ and C57BL/6." evidence="7 8">
    <original>T</original>
    <variation>S</variation>
    <location>
        <position position="36"/>
    </location>
</feature>
<feature type="sequence variant" description="In strain: NZB/BlNJ and C57BL/6." evidence="7 8">
    <original>I</original>
    <variation>T</variation>
    <location>
        <position position="40"/>
    </location>
</feature>
<feature type="sequence variant" description="In strain: NZB/BlNJ and C57BL/6." evidence="7 8">
    <original>F</original>
    <variation>I</variation>
    <location>
        <position position="178"/>
    </location>
</feature>
<comment type="function">
    <text evidence="2 6">Plays a critical role in the sodium-dependent reabsorption of bile acids from the lumen of the small intestine (PubMed:10101301). Transports various bile acids, unconjugated or conjugated, such as cholate and taurocholate (PubMed:10101301). Also responsible for bile acid transport in the renal proximal tubules, a salvage mechanism that helps conserve bile acids. Works collaboratively with the Na(+)-taurocholate cotransporting polypeptide (NTCP), the organic solute transporter (OST), and the bile salt export pump (BSEP), to ensure efficacious biological recycling of bile acids during enterohepatic circulation (By similarity).</text>
</comment>
<comment type="catalytic activity">
    <reaction evidence="6">
        <text>taurocholate(out) + 2 Na(+)(out) = taurocholate(in) + 2 Na(+)(in)</text>
        <dbReference type="Rhea" id="RHEA:71875"/>
        <dbReference type="ChEBI" id="CHEBI:29101"/>
        <dbReference type="ChEBI" id="CHEBI:36257"/>
    </reaction>
</comment>
<comment type="catalytic activity">
    <reaction evidence="2">
        <text>cholate(out) + 2 Na(+)(out) = cholate(in) + 2 Na(+)(in)</text>
        <dbReference type="Rhea" id="RHEA:71911"/>
        <dbReference type="ChEBI" id="CHEBI:29101"/>
        <dbReference type="ChEBI" id="CHEBI:29747"/>
    </reaction>
</comment>
<comment type="catalytic activity">
    <reaction evidence="3">
        <text>taurochenodeoxycholate(out) + 2 Na(+)(out) = taurochenodeoxycholate(in) + 2 Na(+)(in)</text>
        <dbReference type="Rhea" id="RHEA:71923"/>
        <dbReference type="ChEBI" id="CHEBI:9407"/>
        <dbReference type="ChEBI" id="CHEBI:29101"/>
    </reaction>
</comment>
<comment type="catalytic activity">
    <reaction evidence="3">
        <text>tauroursodeoxycholate(out) + 2 Na(+)(out) = tauroursodeoxycholate(in) + 2 Na(+)(in)</text>
        <dbReference type="Rhea" id="RHEA:71927"/>
        <dbReference type="ChEBI" id="CHEBI:29101"/>
        <dbReference type="ChEBI" id="CHEBI:132028"/>
    </reaction>
</comment>
<comment type="catalytic activity">
    <reaction evidence="3">
        <text>glycocholate(out) + 2 Na(+)(out) = glycocholate(in) + 2 Na(+)(in)</text>
        <dbReference type="Rhea" id="RHEA:71935"/>
        <dbReference type="ChEBI" id="CHEBI:29101"/>
        <dbReference type="ChEBI" id="CHEBI:29746"/>
    </reaction>
</comment>
<comment type="catalytic activity">
    <reaction evidence="3">
        <text>tauronorcholate(out) + 2 Na(+)(out) = tauronorcholate(in) + 2 Na(+)(in)</text>
        <dbReference type="Rhea" id="RHEA:71915"/>
        <dbReference type="ChEBI" id="CHEBI:29101"/>
        <dbReference type="ChEBI" id="CHEBI:191405"/>
    </reaction>
</comment>
<comment type="catalytic activity">
    <reaction evidence="3">
        <text>tauroallocholate(out) + 2 Na(+)(out) = tauroallocholate(in) + 2 Na(+)(in)</text>
        <dbReference type="Rhea" id="RHEA:51840"/>
        <dbReference type="ChEBI" id="CHEBI:29101"/>
        <dbReference type="ChEBI" id="CHEBI:191406"/>
    </reaction>
</comment>
<comment type="catalytic activity">
    <reaction evidence="3">
        <text>taurodeoxycholate(out) + 2 Na(+)(out) = taurodeoxycholate(in) + 2 Na(+)(in)</text>
        <dbReference type="Rhea" id="RHEA:72087"/>
        <dbReference type="ChEBI" id="CHEBI:29101"/>
        <dbReference type="ChEBI" id="CHEBI:36261"/>
    </reaction>
</comment>
<comment type="catalytic activity">
    <reaction evidence="3">
        <text>tauro-beta-muricholate(out) + 2 Na(+)(out) = tauro-beta-muricholate(in) + 2 Na(+)(in)</text>
        <dbReference type="Rhea" id="RHEA:72179"/>
        <dbReference type="ChEBI" id="CHEBI:29101"/>
        <dbReference type="ChEBI" id="CHEBI:133064"/>
    </reaction>
</comment>
<comment type="biophysicochemical properties">
    <kinetics>
        <KM evidence="6">37 uM for taurocholate</KM>
    </kinetics>
</comment>
<comment type="subunit">
    <text evidence="1">Monomer and homodimer.</text>
</comment>
<comment type="subcellular location">
    <subcellularLocation>
        <location evidence="1">Membrane</location>
        <topology evidence="1">Multi-pass membrane protein</topology>
    </subcellularLocation>
</comment>
<comment type="tissue specificity">
    <text evidence="6">Expressed in ileum.</text>
</comment>
<comment type="similarity">
    <text evidence="10">Belongs to the bile acid:sodium symporter (BASS) (TC 2.A.28) family.</text>
</comment>
<proteinExistence type="evidence at protein level"/>
<name>NTCP2_MOUSE</name>
<protein>
    <recommendedName>
        <fullName>Ileal sodium/bile acid cotransporter</fullName>
    </recommendedName>
    <alternativeName>
        <fullName>Apical sodium-dependent bile acid transporter</fullName>
        <shortName>ASBT</shortName>
    </alternativeName>
    <alternativeName>
        <fullName>Ileal Na(+)/bile acid cotransporter</fullName>
    </alternativeName>
    <alternativeName>
        <fullName>Ileal sodium-dependent bile acid transporter</fullName>
        <shortName>IBAT</shortName>
        <shortName evidence="9">ISBT</shortName>
    </alternativeName>
    <alternativeName>
        <fullName>Na(+)-dependent ileal bile acid transporter</fullName>
    </alternativeName>
    <alternativeName>
        <fullName>Sodium/taurocholate cotransporting polypeptide, ileal</fullName>
    </alternativeName>
    <alternativeName>
        <fullName>Solute carrier family 10 member 2</fullName>
    </alternativeName>
</protein>
<keyword id="KW-0325">Glycoprotein</keyword>
<keyword id="KW-0406">Ion transport</keyword>
<keyword id="KW-0445">Lipid transport</keyword>
<keyword id="KW-0472">Membrane</keyword>
<keyword id="KW-0597">Phosphoprotein</keyword>
<keyword id="KW-1185">Reference proteome</keyword>
<keyword id="KW-0915">Sodium</keyword>
<keyword id="KW-0739">Sodium transport</keyword>
<keyword id="KW-0769">Symport</keyword>
<keyword id="KW-0812">Transmembrane</keyword>
<keyword id="KW-1133">Transmembrane helix</keyword>
<keyword id="KW-0813">Transport</keyword>
<accession>P70172</accession>
<accession>Q8VI83</accession>
<accession>Q925U7</accession>
<gene>
    <name type="primary">Slc10a2</name>
    <name type="synonym">Ntcp2</name>
</gene>
<evidence type="ECO:0000250" key="1"/>
<evidence type="ECO:0000250" key="2">
    <source>
        <dbReference type="UniProtKB" id="Q12908"/>
    </source>
</evidence>
<evidence type="ECO:0000250" key="3">
    <source>
        <dbReference type="UniProtKB" id="Q28727"/>
    </source>
</evidence>
<evidence type="ECO:0000255" key="4"/>
<evidence type="ECO:0000256" key="5">
    <source>
        <dbReference type="SAM" id="MobiDB-lite"/>
    </source>
</evidence>
<evidence type="ECO:0000269" key="6">
    <source>
    </source>
</evidence>
<evidence type="ECO:0000269" key="7">
    <source ref="2"/>
</evidence>
<evidence type="ECO:0000269" key="8">
    <source ref="3"/>
</evidence>
<evidence type="ECO:0000303" key="9">
    <source>
    </source>
</evidence>
<evidence type="ECO:0000305" key="10"/>
<evidence type="ECO:0007744" key="11">
    <source>
    </source>
</evidence>
<organism>
    <name type="scientific">Mus musculus</name>
    <name type="common">Mouse</name>
    <dbReference type="NCBI Taxonomy" id="10090"/>
    <lineage>
        <taxon>Eukaryota</taxon>
        <taxon>Metazoa</taxon>
        <taxon>Chordata</taxon>
        <taxon>Craniata</taxon>
        <taxon>Vertebrata</taxon>
        <taxon>Euteleostomi</taxon>
        <taxon>Mammalia</taxon>
        <taxon>Eutheria</taxon>
        <taxon>Euarchontoglires</taxon>
        <taxon>Glires</taxon>
        <taxon>Rodentia</taxon>
        <taxon>Myomorpha</taxon>
        <taxon>Muroidea</taxon>
        <taxon>Muridae</taxon>
        <taxon>Murinae</taxon>
        <taxon>Mus</taxon>
        <taxon>Mus</taxon>
    </lineage>
</organism>
<reference key="1">
    <citation type="journal article" date="1999" name="J. Biochem.">
        <title>Characterization, cDNA cloning, and functional expression of mouse ileal sodium-dependent bile acid transporter.</title>
        <authorList>
            <person name="Saeki T."/>
            <person name="Matoba K."/>
            <person name="Furukawa H."/>
            <person name="Kirifuji K."/>
            <person name="Kanamoto R."/>
            <person name="Iwami K."/>
        </authorList>
    </citation>
    <scope>NUCLEOTIDE SEQUENCE [MRNA]</scope>
    <scope>TRANSPORT ACTIVITY</scope>
    <scope>BIOPHYSICOCHEMICAL PROPERTIES</scope>
    <scope>TISSUE SPECIFICITY</scope>
    <source>
        <strain>ICR</strain>
    </source>
</reference>
<reference key="2">
    <citation type="submission" date="2000-05" db="EMBL/GenBank/DDBJ databases">
        <title>Disruption of the ileal bile acid transporter gene in mice.</title>
        <authorList>
            <person name="Dawson P.A."/>
            <person name="Craddock A.L."/>
            <person name="Tietjen M.E."/>
            <person name="Haywood J.H."/>
        </authorList>
    </citation>
    <scope>NUCLEOTIDE SEQUENCE</scope>
    <scope>VARIANTS VAL-29; SER-36; THR-40 AND ILE-178</scope>
    <source>
        <strain>C57BL/6J</strain>
    </source>
</reference>
<reference key="3">
    <citation type="submission" date="2004-01" db="EMBL/GenBank/DDBJ databases">
        <title>New genetic determinants of cholesterol gallstone formation revealed in an intercross of mouse strains NZB and SM.</title>
        <authorList>
            <person name="Lyons M.A."/>
            <person name="Korstanje R."/>
            <person name="Li R."/>
            <person name="Sheehan S.M."/>
            <person name="Walsh K.A."/>
            <person name="Carey M.C."/>
            <person name="Churchill G.A."/>
            <person name="Paigen B."/>
        </authorList>
    </citation>
    <scope>NUCLEOTIDE SEQUENCE</scope>
    <scope>VARIANTS VAL-29; SER-36; THR-40 AND ILE-178</scope>
    <source>
        <strain>NZB/BlNJ</strain>
        <strain>SM/J</strain>
    </source>
</reference>
<reference key="4">
    <citation type="submission" date="2002-01" db="EMBL/GenBank/DDBJ databases">
        <title>Identification of transcription start sites in mouse ileal sodium-dependent bile acid transporter gene.</title>
        <authorList>
            <person name="Saeki T."/>
            <person name="Kirifuji K."/>
            <person name="Kanamoto R."/>
            <person name="Iwami K."/>
        </authorList>
    </citation>
    <scope>NUCLEOTIDE SEQUENCE OF 1-125</scope>
</reference>
<reference key="5">
    <citation type="journal article" date="2010" name="Cell">
        <title>A tissue-specific atlas of mouse protein phosphorylation and expression.</title>
        <authorList>
            <person name="Huttlin E.L."/>
            <person name="Jedrychowski M.P."/>
            <person name="Elias J.E."/>
            <person name="Goswami T."/>
            <person name="Rad R."/>
            <person name="Beausoleil S.A."/>
            <person name="Villen J."/>
            <person name="Haas W."/>
            <person name="Sowa M.E."/>
            <person name="Gygi S.P."/>
        </authorList>
    </citation>
    <scope>PHOSPHORYLATION [LARGE SCALE ANALYSIS] AT SER-335</scope>
    <scope>IDENTIFICATION BY MASS SPECTROMETRY [LARGE SCALE ANALYSIS]</scope>
    <source>
        <tissue>Kidney</tissue>
    </source>
</reference>